<feature type="chain" id="PRO_0000075420" description="Putative transposase InsO for insertion sequence element IS911B">
    <location>
        <begin position="1"/>
        <end position="198"/>
    </location>
</feature>
<feature type="domain" description="Integrase catalytic" evidence="1">
    <location>
        <begin position="105"/>
        <end position="198"/>
    </location>
</feature>
<gene>
    <name type="primary">insO2</name>
    <name type="ordered locus">b4285</name>
</gene>
<accession>Q47718</accession>
<organism>
    <name type="scientific">Escherichia coli (strain K12)</name>
    <dbReference type="NCBI Taxonomy" id="83333"/>
    <lineage>
        <taxon>Bacteria</taxon>
        <taxon>Pseudomonadati</taxon>
        <taxon>Pseudomonadota</taxon>
        <taxon>Gammaproteobacteria</taxon>
        <taxon>Enterobacterales</taxon>
        <taxon>Enterobacteriaceae</taxon>
        <taxon>Escherichia</taxon>
    </lineage>
</organism>
<dbReference type="EMBL" id="U14003">
    <property type="protein sequence ID" value="AAA97181.1"/>
    <property type="molecule type" value="Genomic_DNA"/>
</dbReference>
<dbReference type="EMBL" id="U00096">
    <property type="status" value="NOT_ANNOTATED_CDS"/>
    <property type="molecule type" value="Genomic_DNA"/>
</dbReference>
<dbReference type="PIR" id="S56510">
    <property type="entry name" value="S56510"/>
</dbReference>
<dbReference type="DIP" id="DIP-28090N"/>
<dbReference type="FunCoup" id="Q47718">
    <property type="interactions" value="69"/>
</dbReference>
<dbReference type="IntAct" id="Q47718">
    <property type="interactions" value="5"/>
</dbReference>
<dbReference type="EchoBASE" id="EB4747"/>
<dbReference type="InParanoid" id="Q47718"/>
<dbReference type="OMA" id="QVFGVHH"/>
<dbReference type="PhylomeDB" id="Q47718"/>
<dbReference type="Proteomes" id="UP000000625">
    <property type="component" value="Chromosome"/>
</dbReference>
<dbReference type="GO" id="GO:0003677">
    <property type="term" value="F:DNA binding"/>
    <property type="evidence" value="ECO:0007669"/>
    <property type="project" value="UniProtKB-KW"/>
</dbReference>
<dbReference type="GO" id="GO:0015074">
    <property type="term" value="P:DNA integration"/>
    <property type="evidence" value="ECO:0007669"/>
    <property type="project" value="InterPro"/>
</dbReference>
<dbReference type="GO" id="GO:0006310">
    <property type="term" value="P:DNA recombination"/>
    <property type="evidence" value="ECO:0007669"/>
    <property type="project" value="UniProtKB-KW"/>
</dbReference>
<dbReference type="GO" id="GO:0032196">
    <property type="term" value="P:transposition"/>
    <property type="evidence" value="ECO:0007669"/>
    <property type="project" value="UniProtKB-KW"/>
</dbReference>
<dbReference type="Gene3D" id="3.30.420.10">
    <property type="entry name" value="Ribonuclease H-like superfamily/Ribonuclease H"/>
    <property type="match status" value="1"/>
</dbReference>
<dbReference type="InterPro" id="IPR001584">
    <property type="entry name" value="Integrase_cat-core"/>
</dbReference>
<dbReference type="InterPro" id="IPR012337">
    <property type="entry name" value="RNaseH-like_sf"/>
</dbReference>
<dbReference type="InterPro" id="IPR036397">
    <property type="entry name" value="RNaseH_sf"/>
</dbReference>
<dbReference type="InterPro" id="IPR050900">
    <property type="entry name" value="Transposase_IS3/IS150/IS904"/>
</dbReference>
<dbReference type="PANTHER" id="PTHR46889">
    <property type="entry name" value="TRANSPOSASE INSF FOR INSERTION SEQUENCE IS3B-RELATED"/>
    <property type="match status" value="1"/>
</dbReference>
<dbReference type="PANTHER" id="PTHR46889:SF4">
    <property type="entry name" value="TRANSPOSASE INSO FOR INSERTION SEQUENCE ELEMENT IS911B-RELATED"/>
    <property type="match status" value="1"/>
</dbReference>
<dbReference type="Pfam" id="PF00665">
    <property type="entry name" value="rve"/>
    <property type="match status" value="1"/>
</dbReference>
<dbReference type="SUPFAM" id="SSF53098">
    <property type="entry name" value="Ribonuclease H-like"/>
    <property type="match status" value="1"/>
</dbReference>
<dbReference type="PROSITE" id="PS50994">
    <property type="entry name" value="INTEGRASE"/>
    <property type="match status" value="1"/>
</dbReference>
<evidence type="ECO:0000255" key="1">
    <source>
        <dbReference type="PROSITE-ProRule" id="PRU00457"/>
    </source>
</evidence>
<evidence type="ECO:0000305" key="2"/>
<keyword id="KW-0233">DNA recombination</keyword>
<keyword id="KW-0238">DNA-binding</keyword>
<keyword id="KW-1185">Reference proteome</keyword>
<keyword id="KW-0814">Transposable element</keyword>
<keyword id="KW-0815">Transposition</keyword>
<comment type="function">
    <text>Involved in the transposition of the insertion sequence IS911B.</text>
</comment>
<comment type="caution">
    <text evidence="2">Could be the product of a pseudogene. Is missing N- and C-terminal sequences compared to its orthologs.</text>
</comment>
<name>INSO2_ECOLI</name>
<proteinExistence type="uncertain"/>
<sequence length="198" mass="22265">MPFYFRKECPLNSGYLRKNRPEKPDGRRAVLRSQVLELHGISHGSAGARSIATMATRRGYQMGRWLAGRLMKELGLVSCQQPTHRYKRGGHEHVAIPNYLERQFAVTEPNQVWCGDVTYIWTGKRWAYLAVVLDLFARKPVGWAMSFSPDSRLTMKALEMAWETRGKPVGVMFQAIKAVIIRAGSSGSYCGDTGSGRV</sequence>
<protein>
    <recommendedName>
        <fullName>Putative transposase InsO for insertion sequence element IS911B</fullName>
    </recommendedName>
</protein>
<reference key="1">
    <citation type="journal article" date="1995" name="Nucleic Acids Res.">
        <title>Analysis of the Escherichia coli genome VI: DNA sequence of the region from 92.8 through 100 minutes.</title>
        <authorList>
            <person name="Burland V.D."/>
            <person name="Plunkett G. III"/>
            <person name="Sofia H.J."/>
            <person name="Daniels D.L."/>
            <person name="Blattner F.R."/>
        </authorList>
    </citation>
    <scope>NUCLEOTIDE SEQUENCE [LARGE SCALE GENOMIC DNA]</scope>
    <source>
        <strain>K12 / MG1655 / ATCC 47076</strain>
    </source>
</reference>
<reference key="2">
    <citation type="journal article" date="1997" name="Science">
        <title>The complete genome sequence of Escherichia coli K-12.</title>
        <authorList>
            <person name="Blattner F.R."/>
            <person name="Plunkett G. III"/>
            <person name="Bloch C.A."/>
            <person name="Perna N.T."/>
            <person name="Burland V."/>
            <person name="Riley M."/>
            <person name="Collado-Vides J."/>
            <person name="Glasner J.D."/>
            <person name="Rode C.K."/>
            <person name="Mayhew G.F."/>
            <person name="Gregor J."/>
            <person name="Davis N.W."/>
            <person name="Kirkpatrick H.A."/>
            <person name="Goeden M.A."/>
            <person name="Rose D.J."/>
            <person name="Mau B."/>
            <person name="Shao Y."/>
        </authorList>
    </citation>
    <scope>NUCLEOTIDE SEQUENCE [LARGE SCALE GENOMIC DNA]</scope>
    <source>
        <strain>K12 / MG1655 / ATCC 47076</strain>
    </source>
</reference>